<accession>P84951</accession>
<organism>
    <name type="scientific">Pithecopus azureus</name>
    <name type="common">Orange-legged monkey tree frog</name>
    <name type="synonym">Phyllomedusa azurea</name>
    <dbReference type="NCBI Taxonomy" id="2034991"/>
    <lineage>
        <taxon>Eukaryota</taxon>
        <taxon>Metazoa</taxon>
        <taxon>Chordata</taxon>
        <taxon>Craniata</taxon>
        <taxon>Vertebrata</taxon>
        <taxon>Euteleostomi</taxon>
        <taxon>Amphibia</taxon>
        <taxon>Batrachia</taxon>
        <taxon>Anura</taxon>
        <taxon>Neobatrachia</taxon>
        <taxon>Hyloidea</taxon>
        <taxon>Hylidae</taxon>
        <taxon>Phyllomedusinae</taxon>
        <taxon>Pithecopus</taxon>
    </lineage>
</organism>
<sequence>FLFFAFPHPL</sequence>
<evidence type="ECO:0000269" key="1">
    <source>
    </source>
</evidence>
<evidence type="ECO:0000303" key="2">
    <source>
    </source>
</evidence>
<evidence type="ECO:0000305" key="3"/>
<keyword id="KW-0027">Amidation</keyword>
<keyword id="KW-0903">Direct protein sequencing</keyword>
<keyword id="KW-0964">Secreted</keyword>
<protein>
    <recommendedName>
        <fullName evidence="2">Novel peptide 1</fullName>
    </recommendedName>
    <alternativeName>
        <fullName evidence="2">PRP-HA1</fullName>
    </alternativeName>
</protein>
<dbReference type="GO" id="GO:0005576">
    <property type="term" value="C:extracellular region"/>
    <property type="evidence" value="ECO:0007669"/>
    <property type="project" value="UniProtKB-SubCell"/>
</dbReference>
<name>NOVP1_PITAZ</name>
<feature type="peptide" id="PRO_0000250434" description="Novel peptide 1" evidence="1">
    <location>
        <begin position="1"/>
        <end position="10"/>
    </location>
</feature>
<feature type="modified residue" description="Leucine amide" evidence="1">
    <location>
        <position position="10"/>
    </location>
</feature>
<proteinExistence type="evidence at protein level"/>
<reference evidence="3" key="1">
    <citation type="journal article" date="2007" name="J. Proteome Res.">
        <title>Amphibian skin secretomics: application of parallel quadrupole time-of-flight mass spectrometry and peptide precursor cDNA cloning to rapidly characterize the skin secretory peptidome of Phyllomedusa hypochondrialis azurea: discovery of a novel peptide family, the hyposins.</title>
        <authorList>
            <person name="Thompson A.H."/>
            <person name="Bjourson A.J."/>
            <person name="Orr D.F."/>
            <person name="Shaw C."/>
            <person name="McClean S."/>
        </authorList>
    </citation>
    <scope>PROTEIN SEQUENCE</scope>
    <scope>SUBCELLULAR LOCATION</scope>
    <scope>TISSUE SPECIFICITY</scope>
    <scope>MASS SPECTROMETRY</scope>
    <scope>AMIDATION AT LEU-10</scope>
    <source>
        <tissue evidence="1">Skin secretion</tissue>
    </source>
</reference>
<comment type="subcellular location">
    <subcellularLocation>
        <location evidence="1">Secreted</location>
    </subcellularLocation>
</comment>
<comment type="tissue specificity">
    <text evidence="1">Expressed by the skin glands.</text>
</comment>
<comment type="mass spectrometry"/>
<comment type="caution">
    <text evidence="3">PubMed:17696382 incorrectly cites this protein with the AC P84960.</text>
</comment>